<reference key="1">
    <citation type="submission" date="2007-05" db="EMBL/GenBank/DDBJ databases">
        <title>Complete sequence of Thermosipho melanesiensis BI429.</title>
        <authorList>
            <consortium name="US DOE Joint Genome Institute"/>
            <person name="Copeland A."/>
            <person name="Lucas S."/>
            <person name="Lapidus A."/>
            <person name="Barry K."/>
            <person name="Glavina del Rio T."/>
            <person name="Dalin E."/>
            <person name="Tice H."/>
            <person name="Pitluck S."/>
            <person name="Chertkov O."/>
            <person name="Brettin T."/>
            <person name="Bruce D."/>
            <person name="Detter J.C."/>
            <person name="Han C."/>
            <person name="Schmutz J."/>
            <person name="Larimer F."/>
            <person name="Land M."/>
            <person name="Hauser L."/>
            <person name="Kyrpides N."/>
            <person name="Mikhailova N."/>
            <person name="Nelson K."/>
            <person name="Gogarten J.P."/>
            <person name="Noll K."/>
            <person name="Richardson P."/>
        </authorList>
    </citation>
    <scope>NUCLEOTIDE SEQUENCE [LARGE SCALE GENOMIC DNA]</scope>
    <source>
        <strain>DSM 12029 / CIP 104789 / BI429</strain>
    </source>
</reference>
<comment type="function">
    <text evidence="1">Involved in the biosynthesis of ADP-glucose, a building block required for the elongation reactions to produce glycogen. Catalyzes the reaction between ATP and alpha-D-glucose 1-phosphate (G1P) to produce pyrophosphate and ADP-Glc.</text>
</comment>
<comment type="catalytic activity">
    <reaction evidence="1">
        <text>alpha-D-glucose 1-phosphate + ATP + H(+) = ADP-alpha-D-glucose + diphosphate</text>
        <dbReference type="Rhea" id="RHEA:12120"/>
        <dbReference type="ChEBI" id="CHEBI:15378"/>
        <dbReference type="ChEBI" id="CHEBI:30616"/>
        <dbReference type="ChEBI" id="CHEBI:33019"/>
        <dbReference type="ChEBI" id="CHEBI:57498"/>
        <dbReference type="ChEBI" id="CHEBI:58601"/>
        <dbReference type="EC" id="2.7.7.27"/>
    </reaction>
</comment>
<comment type="pathway">
    <text evidence="1">Glycan biosynthesis; glycogen biosynthesis.</text>
</comment>
<comment type="subunit">
    <text evidence="1">Homotetramer.</text>
</comment>
<comment type="similarity">
    <text evidence="1">Belongs to the bacterial/plant glucose-1-phosphate adenylyltransferase family.</text>
</comment>
<feature type="chain" id="PRO_1000051591" description="Glucose-1-phosphate adenylyltransferase">
    <location>
        <begin position="1"/>
        <end position="412"/>
    </location>
</feature>
<feature type="binding site" evidence="1">
    <location>
        <position position="98"/>
    </location>
    <ligand>
        <name>alpha-D-glucose 1-phosphate</name>
        <dbReference type="ChEBI" id="CHEBI:58601"/>
    </ligand>
</feature>
<feature type="binding site" evidence="1">
    <location>
        <position position="163"/>
    </location>
    <ligand>
        <name>alpha-D-glucose 1-phosphate</name>
        <dbReference type="ChEBI" id="CHEBI:58601"/>
    </ligand>
</feature>
<feature type="binding site" evidence="1">
    <location>
        <begin position="178"/>
        <end position="179"/>
    </location>
    <ligand>
        <name>alpha-D-glucose 1-phosphate</name>
        <dbReference type="ChEBI" id="CHEBI:58601"/>
    </ligand>
</feature>
<feature type="binding site" evidence="1">
    <location>
        <position position="189"/>
    </location>
    <ligand>
        <name>alpha-D-glucose 1-phosphate</name>
        <dbReference type="ChEBI" id="CHEBI:58601"/>
    </ligand>
</feature>
<organism>
    <name type="scientific">Thermosipho melanesiensis (strain DSM 12029 / CIP 104789 / BI429)</name>
    <dbReference type="NCBI Taxonomy" id="391009"/>
    <lineage>
        <taxon>Bacteria</taxon>
        <taxon>Thermotogati</taxon>
        <taxon>Thermotogota</taxon>
        <taxon>Thermotogae</taxon>
        <taxon>Thermotogales</taxon>
        <taxon>Fervidobacteriaceae</taxon>
        <taxon>Thermosipho</taxon>
    </lineage>
</organism>
<keyword id="KW-0067">ATP-binding</keyword>
<keyword id="KW-0119">Carbohydrate metabolism</keyword>
<keyword id="KW-0320">Glycogen biosynthesis</keyword>
<keyword id="KW-0321">Glycogen metabolism</keyword>
<keyword id="KW-0547">Nucleotide-binding</keyword>
<keyword id="KW-0548">Nucleotidyltransferase</keyword>
<keyword id="KW-0808">Transferase</keyword>
<dbReference type="EC" id="2.7.7.27" evidence="1"/>
<dbReference type="EMBL" id="CP000716">
    <property type="protein sequence ID" value="ABR30115.1"/>
    <property type="molecule type" value="Genomic_DNA"/>
</dbReference>
<dbReference type="RefSeq" id="WP_012056476.1">
    <property type="nucleotide sequence ID" value="NC_009616.1"/>
</dbReference>
<dbReference type="SMR" id="A6LJL4"/>
<dbReference type="STRING" id="391009.Tmel_0241"/>
<dbReference type="KEGG" id="tme:Tmel_0241"/>
<dbReference type="eggNOG" id="COG0448">
    <property type="taxonomic scope" value="Bacteria"/>
</dbReference>
<dbReference type="HOGENOM" id="CLU_029499_14_0_0"/>
<dbReference type="OrthoDB" id="9801810at2"/>
<dbReference type="UniPathway" id="UPA00164"/>
<dbReference type="Proteomes" id="UP000001110">
    <property type="component" value="Chromosome"/>
</dbReference>
<dbReference type="GO" id="GO:0005524">
    <property type="term" value="F:ATP binding"/>
    <property type="evidence" value="ECO:0007669"/>
    <property type="project" value="UniProtKB-KW"/>
</dbReference>
<dbReference type="GO" id="GO:0008878">
    <property type="term" value="F:glucose-1-phosphate adenylyltransferase activity"/>
    <property type="evidence" value="ECO:0007669"/>
    <property type="project" value="UniProtKB-UniRule"/>
</dbReference>
<dbReference type="GO" id="GO:0005978">
    <property type="term" value="P:glycogen biosynthetic process"/>
    <property type="evidence" value="ECO:0007669"/>
    <property type="project" value="UniProtKB-UniRule"/>
</dbReference>
<dbReference type="CDD" id="cd02508">
    <property type="entry name" value="ADP_Glucose_PP"/>
    <property type="match status" value="1"/>
</dbReference>
<dbReference type="CDD" id="cd04651">
    <property type="entry name" value="LbH_G1P_AT_C"/>
    <property type="match status" value="1"/>
</dbReference>
<dbReference type="Gene3D" id="2.160.10.10">
    <property type="entry name" value="Hexapeptide repeat proteins"/>
    <property type="match status" value="1"/>
</dbReference>
<dbReference type="Gene3D" id="3.90.550.10">
    <property type="entry name" value="Spore Coat Polysaccharide Biosynthesis Protein SpsA, Chain A"/>
    <property type="match status" value="1"/>
</dbReference>
<dbReference type="HAMAP" id="MF_00624">
    <property type="entry name" value="GlgC"/>
    <property type="match status" value="1"/>
</dbReference>
<dbReference type="InterPro" id="IPR011831">
    <property type="entry name" value="ADP-Glc_PPase"/>
</dbReference>
<dbReference type="InterPro" id="IPR005836">
    <property type="entry name" value="ADP_Glu_pyroP_CS"/>
</dbReference>
<dbReference type="InterPro" id="IPR023049">
    <property type="entry name" value="GlgC_bac"/>
</dbReference>
<dbReference type="InterPro" id="IPR056818">
    <property type="entry name" value="GlmU/GlgC-like_hexapep"/>
</dbReference>
<dbReference type="InterPro" id="IPR005835">
    <property type="entry name" value="NTP_transferase_dom"/>
</dbReference>
<dbReference type="InterPro" id="IPR029044">
    <property type="entry name" value="Nucleotide-diphossugar_trans"/>
</dbReference>
<dbReference type="InterPro" id="IPR011004">
    <property type="entry name" value="Trimer_LpxA-like_sf"/>
</dbReference>
<dbReference type="NCBIfam" id="TIGR02091">
    <property type="entry name" value="glgC"/>
    <property type="match status" value="1"/>
</dbReference>
<dbReference type="NCBIfam" id="NF003670">
    <property type="entry name" value="PRK05293.1"/>
    <property type="match status" value="1"/>
</dbReference>
<dbReference type="PANTHER" id="PTHR43523:SF2">
    <property type="entry name" value="GLUCOSE-1-PHOSPHATE ADENYLYLTRANSFERASE"/>
    <property type="match status" value="1"/>
</dbReference>
<dbReference type="PANTHER" id="PTHR43523">
    <property type="entry name" value="GLUCOSE-1-PHOSPHATE ADENYLYLTRANSFERASE-RELATED"/>
    <property type="match status" value="1"/>
</dbReference>
<dbReference type="Pfam" id="PF24894">
    <property type="entry name" value="Hexapep_GlmU"/>
    <property type="match status" value="1"/>
</dbReference>
<dbReference type="Pfam" id="PF00483">
    <property type="entry name" value="NTP_transferase"/>
    <property type="match status" value="1"/>
</dbReference>
<dbReference type="SUPFAM" id="SSF53448">
    <property type="entry name" value="Nucleotide-diphospho-sugar transferases"/>
    <property type="match status" value="1"/>
</dbReference>
<dbReference type="SUPFAM" id="SSF51161">
    <property type="entry name" value="Trimeric LpxA-like enzymes"/>
    <property type="match status" value="1"/>
</dbReference>
<dbReference type="PROSITE" id="PS00808">
    <property type="entry name" value="ADP_GLC_PYROPHOSPH_1"/>
    <property type="match status" value="1"/>
</dbReference>
<dbReference type="PROSITE" id="PS00809">
    <property type="entry name" value="ADP_GLC_PYROPHOSPH_2"/>
    <property type="match status" value="1"/>
</dbReference>
<protein>
    <recommendedName>
        <fullName evidence="1">Glucose-1-phosphate adenylyltransferase</fullName>
        <ecNumber evidence="1">2.7.7.27</ecNumber>
    </recommendedName>
    <alternativeName>
        <fullName evidence="1">ADP-glucose pyrophosphorylase</fullName>
        <shortName evidence="1">ADPGlc PPase</shortName>
    </alternativeName>
    <alternativeName>
        <fullName evidence="1">ADP-glucose synthase</fullName>
    </alternativeName>
</protein>
<proteinExistence type="inferred from homology"/>
<evidence type="ECO:0000255" key="1">
    <source>
        <dbReference type="HAMAP-Rule" id="MF_00624"/>
    </source>
</evidence>
<name>GLGC_THEM4</name>
<accession>A6LJL4</accession>
<gene>
    <name evidence="1" type="primary">glgC</name>
    <name type="ordered locus">Tmel_0241</name>
</gene>
<sequence>MKNVVALILAGGQGTRLGVLTEKIAKPAVQFGGKYRLIDFTMSNCVNSGIYKIGVLTQYKPHLLNRHIGIGKPWDLDRKDGGVTILQPYSTEKVGVWYKGTADAVYSNIEFVDSYSPDYVVILSGDHIYSMDYNELVDYHVAKSALGTVACMEVPLSEANRFGIMVTDLENRIIEFQEKPKFPKSTLASLGIYVFQWNFIREVLMEDAKDENSTHDFGKDIIPKIINTKRVYAFPFEGYWKDVGTIYSYWESNLELTRPIPPFNIHDENWKIYTHSEEMPPAYISDDARVKNSLISEGCEIYGEVYNSVLAQGVEVGEGVIIKNSVVMSRVRIGNNCFIENAIIAENVVIGNEVKIGVGEFVENKLNSRVYNSEISVIGMDSVIEDKVKIGKNCVVGIDKIVSKSLTSGEYI</sequence>